<keyword id="KW-0202">Cytokine</keyword>
<keyword id="KW-1015">Disulfide bond</keyword>
<keyword id="KW-0325">Glycoprotein</keyword>
<keyword id="KW-0964">Secreted</keyword>
<keyword id="KW-0732">Signal</keyword>
<dbReference type="EMBL" id="AB246276">
    <property type="protein sequence ID" value="BAE75853.1"/>
    <property type="molecule type" value="mRNA"/>
</dbReference>
<dbReference type="SMR" id="Q2PE73"/>
<dbReference type="GlyCosmos" id="Q2PE73">
    <property type="glycosylation" value="1 site, No reported glycans"/>
</dbReference>
<dbReference type="GO" id="GO:0005615">
    <property type="term" value="C:extracellular space"/>
    <property type="evidence" value="ECO:0000250"/>
    <property type="project" value="UniProtKB"/>
</dbReference>
<dbReference type="GO" id="GO:0005125">
    <property type="term" value="F:cytokine activity"/>
    <property type="evidence" value="ECO:0007669"/>
    <property type="project" value="UniProtKB-KW"/>
</dbReference>
<dbReference type="GO" id="GO:0006955">
    <property type="term" value="P:immune response"/>
    <property type="evidence" value="ECO:0007669"/>
    <property type="project" value="InterPro"/>
</dbReference>
<dbReference type="GO" id="GO:0030889">
    <property type="term" value="P:negative regulation of B cell proliferation"/>
    <property type="evidence" value="ECO:0000250"/>
    <property type="project" value="UniProtKB"/>
</dbReference>
<dbReference type="GO" id="GO:0002719">
    <property type="term" value="P:negative regulation of cytokine production involved in immune response"/>
    <property type="evidence" value="ECO:0000250"/>
    <property type="project" value="UniProtKB"/>
</dbReference>
<dbReference type="GO" id="GO:0050728">
    <property type="term" value="P:negative regulation of inflammatory response"/>
    <property type="evidence" value="ECO:0000250"/>
    <property type="project" value="UniProtKB"/>
</dbReference>
<dbReference type="GO" id="GO:0032715">
    <property type="term" value="P:negative regulation of interleukin-6 production"/>
    <property type="evidence" value="ECO:0000250"/>
    <property type="project" value="UniProtKB"/>
</dbReference>
<dbReference type="GO" id="GO:0051045">
    <property type="term" value="P:negative regulation of membrane protein ectodomain proteolysis"/>
    <property type="evidence" value="ECO:0000250"/>
    <property type="project" value="UniProtKB"/>
</dbReference>
<dbReference type="GO" id="GO:0002904">
    <property type="term" value="P:positive regulation of B cell apoptotic process"/>
    <property type="evidence" value="ECO:0000250"/>
    <property type="project" value="UniProtKB"/>
</dbReference>
<dbReference type="GO" id="GO:0001819">
    <property type="term" value="P:positive regulation of cytokine production"/>
    <property type="evidence" value="ECO:0000250"/>
    <property type="project" value="UniProtKB"/>
</dbReference>
<dbReference type="GO" id="GO:0051091">
    <property type="term" value="P:positive regulation of DNA-binding transcription factor activity"/>
    <property type="evidence" value="ECO:0000250"/>
    <property type="project" value="UniProtKB"/>
</dbReference>
<dbReference type="GO" id="GO:0045893">
    <property type="term" value="P:positive regulation of DNA-templated transcription"/>
    <property type="evidence" value="ECO:0000250"/>
    <property type="project" value="UniProtKB"/>
</dbReference>
<dbReference type="GO" id="GO:0051384">
    <property type="term" value="P:response to glucocorticoid"/>
    <property type="evidence" value="ECO:0000250"/>
    <property type="project" value="UniProtKB"/>
</dbReference>
<dbReference type="GO" id="GO:0002237">
    <property type="term" value="P:response to molecule of bacterial origin"/>
    <property type="evidence" value="ECO:0000250"/>
    <property type="project" value="UniProtKB"/>
</dbReference>
<dbReference type="FunFam" id="1.20.1250.10:FF:000011">
    <property type="entry name" value="Interleukin-10"/>
    <property type="match status" value="1"/>
</dbReference>
<dbReference type="Gene3D" id="1.20.1250.10">
    <property type="match status" value="1"/>
</dbReference>
<dbReference type="InterPro" id="IPR009079">
    <property type="entry name" value="4_helix_cytokine-like_core"/>
</dbReference>
<dbReference type="InterPro" id="IPR000098">
    <property type="entry name" value="IL-10"/>
</dbReference>
<dbReference type="InterPro" id="IPR020443">
    <property type="entry name" value="IL-10/19/20/24/26"/>
</dbReference>
<dbReference type="InterPro" id="IPR020423">
    <property type="entry name" value="IL-10_CS"/>
</dbReference>
<dbReference type="PANTHER" id="PTHR48482:SF5">
    <property type="entry name" value="INTERLEUKIN-10"/>
    <property type="match status" value="1"/>
</dbReference>
<dbReference type="PANTHER" id="PTHR48482">
    <property type="entry name" value="INTERLEUKIN-19-RELATED"/>
    <property type="match status" value="1"/>
</dbReference>
<dbReference type="Pfam" id="PF00726">
    <property type="entry name" value="IL10"/>
    <property type="match status" value="1"/>
</dbReference>
<dbReference type="PRINTS" id="PR01294">
    <property type="entry name" value="INTRLEUKIN10"/>
</dbReference>
<dbReference type="SMART" id="SM00188">
    <property type="entry name" value="IL10"/>
    <property type="match status" value="1"/>
</dbReference>
<dbReference type="SUPFAM" id="SSF47266">
    <property type="entry name" value="4-helical cytokines"/>
    <property type="match status" value="1"/>
</dbReference>
<dbReference type="PROSITE" id="PS00520">
    <property type="entry name" value="INTERLEUKIN_10"/>
    <property type="match status" value="1"/>
</dbReference>
<gene>
    <name type="primary">IL10</name>
</gene>
<comment type="function">
    <text evidence="2 3">Major immune regulatory cytokine that acts on many cells of the immune system where it has profound anti-inflammatory functions, limiting excessive tissue disruption caused by inflammation. Mechanistically, IL10 binds to its heterotetrameric receptor comprising IL10RA and IL10RB leading to JAK1 and STAT2-mediated phosphorylation of STAT3. In turn, STAT3 translocates to the nucleus where it drives expression of anti-inflammatory mediators. Targets antigen-presenting cells (APCs) such as macrophages and monocytes and inhibits their release of pro-inflammatory cytokines including granulocyte-macrophage colony-stimulating factor /GM-CSF, granulocyte colony-stimulating factor/G-CSF, IL-1 alpha, IL-1 beta, IL-6, IL-8 and TNF-alpha. Also interferes with antigen presentation by reducing the expression of MHC-class II and co-stimulatory molecules, thereby inhibiting their ability to induce T cell activation (By similarity). In addition, controls the inflammatory response of macrophages by reprogramming essential metabolic pathways including mTOR signaling (By similarity).</text>
</comment>
<comment type="subunit">
    <text evidence="3">Homodimer. Interacts with IL10RA and IL10RB.</text>
</comment>
<comment type="subcellular location">
    <subcellularLocation>
        <location evidence="3">Secreted</location>
    </subcellularLocation>
</comment>
<comment type="similarity">
    <text evidence="5">Belongs to the IL-10 family.</text>
</comment>
<evidence type="ECO:0000250" key="1"/>
<evidence type="ECO:0000250" key="2">
    <source>
        <dbReference type="UniProtKB" id="P18893"/>
    </source>
</evidence>
<evidence type="ECO:0000250" key="3">
    <source>
        <dbReference type="UniProtKB" id="P22301"/>
    </source>
</evidence>
<evidence type="ECO:0000255" key="4"/>
<evidence type="ECO:0000305" key="5"/>
<sequence length="179" mass="20459">MPSSSALLCCLVFLAGVAASRDASTLSDSSCTQFPTSLPHMLRELRAAFSRVKTFFQMKDQLDSLLLTQSLLDDFKGYLGCQALSEMIQFYLEEVMPQAENHGPDIKEHVNSLGEKLKTLRLRLRRCHRFLPCENKSKAVEQVKRAFSKLQDRGVYKAMSEFDIFINYIETYVTTKMQK</sequence>
<reference key="1">
    <citation type="journal article" date="2006" name="Vet. Immunol. Immunopathol.">
        <title>Comparative assessment of Th1 and Th2 cytokines of swamp type buffalo and other bubaline breeds by molecular cloning, sequencing and phylogenetics.</title>
        <authorList>
            <person name="Mingala C.N."/>
            <person name="Odbileg R."/>
            <person name="Konnai S."/>
            <person name="Ohashi K."/>
            <person name="Onuma M."/>
        </authorList>
    </citation>
    <scope>NUCLEOTIDE SEQUENCE [MRNA]</scope>
</reference>
<name>IL10_BUBCA</name>
<organism>
    <name type="scientific">Bubalus carabanensis</name>
    <name type="common">Swamp type water buffalo</name>
    <name type="synonym">Bubalus bubalis carabanensis</name>
    <dbReference type="NCBI Taxonomy" id="3119969"/>
    <lineage>
        <taxon>Eukaryota</taxon>
        <taxon>Metazoa</taxon>
        <taxon>Chordata</taxon>
        <taxon>Craniata</taxon>
        <taxon>Vertebrata</taxon>
        <taxon>Euteleostomi</taxon>
        <taxon>Mammalia</taxon>
        <taxon>Eutheria</taxon>
        <taxon>Laurasiatheria</taxon>
        <taxon>Artiodactyla</taxon>
        <taxon>Ruminantia</taxon>
        <taxon>Pecora</taxon>
        <taxon>Bovidae</taxon>
        <taxon>Bovinae</taxon>
        <taxon>Bubalus</taxon>
    </lineage>
</organism>
<accession>Q2PE73</accession>
<proteinExistence type="evidence at transcript level"/>
<protein>
    <recommendedName>
        <fullName>Interleukin-10</fullName>
        <shortName>IL-10</shortName>
    </recommendedName>
    <alternativeName>
        <fullName>Cytokine synthesis inhibitory factor</fullName>
        <shortName>CSIF</shortName>
    </alternativeName>
</protein>
<feature type="signal peptide" evidence="4">
    <location>
        <begin position="1"/>
        <end position="19"/>
    </location>
</feature>
<feature type="chain" id="PRO_0000254893" description="Interleukin-10">
    <location>
        <begin position="20"/>
        <end position="179"/>
    </location>
</feature>
<feature type="glycosylation site" description="N-linked (GlcNAc...) asparagine" evidence="4">
    <location>
        <position position="135"/>
    </location>
</feature>
<feature type="disulfide bond" evidence="1">
    <location>
        <begin position="31"/>
        <end position="127"/>
    </location>
</feature>
<feature type="disulfide bond" evidence="1">
    <location>
        <begin position="81"/>
        <end position="133"/>
    </location>
</feature>